<protein>
    <recommendedName>
        <fullName>Calpain small subunit 2</fullName>
        <shortName>CSS2</shortName>
    </recommendedName>
    <alternativeName>
        <fullName>Calcium-dependent protease small subunit 2</fullName>
    </alternativeName>
</protein>
<accession>Q96L46</accession>
<accession>Q9BPV4</accession>
<evidence type="ECO:0000250" key="1"/>
<evidence type="ECO:0000250" key="2">
    <source>
        <dbReference type="UniProtKB" id="Q64537"/>
    </source>
</evidence>
<evidence type="ECO:0000255" key="3">
    <source>
        <dbReference type="PROSITE-ProRule" id="PRU00448"/>
    </source>
</evidence>
<evidence type="ECO:0000305" key="4"/>
<proteinExistence type="evidence at protein level"/>
<reference key="1">
    <citation type="journal article" date="2002" name="Biochem. J.">
        <title>A novel human small subunit of calpains.</title>
        <authorList>
            <person name="Schad E."/>
            <person name="Farkas A."/>
            <person name="Jekely G."/>
            <person name="Tompa P."/>
            <person name="Friedrich P."/>
        </authorList>
    </citation>
    <scope>NUCLEOTIDE SEQUENCE [MRNA]</scope>
</reference>
<reference key="2">
    <citation type="journal article" date="2004" name="Genome Res.">
        <title>The status, quality, and expansion of the NIH full-length cDNA project: the Mammalian Gene Collection (MGC).</title>
        <authorList>
            <consortium name="The MGC Project Team"/>
        </authorList>
    </citation>
    <scope>NUCLEOTIDE SEQUENCE [LARGE SCALE MRNA]</scope>
    <source>
        <tissue>Urinary bladder carcinoma</tissue>
    </source>
</reference>
<feature type="chain" id="PRO_0000073718" description="Calpain small subunit 2">
    <location>
        <begin position="1"/>
        <end position="248"/>
    </location>
</feature>
<feature type="domain" description="EF-hand 1" evidence="3">
    <location>
        <begin position="119"/>
        <end position="152"/>
    </location>
</feature>
<feature type="domain" description="EF-hand 2" evidence="3">
    <location>
        <begin position="149"/>
        <end position="184"/>
    </location>
</feature>
<feature type="domain" description="EF-hand 3" evidence="4">
    <location>
        <begin position="185"/>
        <end position="213"/>
    </location>
</feature>
<feature type="domain" description="EF-hand 4" evidence="3">
    <location>
        <begin position="214"/>
        <end position="248"/>
    </location>
</feature>
<feature type="binding site" evidence="2">
    <location>
        <position position="89"/>
    </location>
    <ligand>
        <name>Ca(2+)</name>
        <dbReference type="ChEBI" id="CHEBI:29108"/>
        <label>1</label>
    </ligand>
</feature>
<feature type="binding site" evidence="2">
    <location>
        <position position="92"/>
    </location>
    <ligand>
        <name>Ca(2+)</name>
        <dbReference type="ChEBI" id="CHEBI:29108"/>
        <label>1</label>
    </ligand>
</feature>
<feature type="binding site" evidence="2">
    <location>
        <position position="94"/>
    </location>
    <ligand>
        <name>Ca(2+)</name>
        <dbReference type="ChEBI" id="CHEBI:29108"/>
        <label>1</label>
    </ligand>
</feature>
<feature type="binding site" evidence="2">
    <location>
        <position position="117"/>
    </location>
    <ligand>
        <name>Ca(2+)</name>
        <dbReference type="ChEBI" id="CHEBI:29108"/>
        <label>4</label>
    </ligand>
</feature>
<feature type="binding site" evidence="3">
    <location>
        <position position="132"/>
    </location>
    <ligand>
        <name>Ca(2+)</name>
        <dbReference type="ChEBI" id="CHEBI:29108"/>
        <label>2</label>
    </ligand>
</feature>
<feature type="binding site" evidence="3">
    <location>
        <position position="134"/>
    </location>
    <ligand>
        <name>Ca(2+)</name>
        <dbReference type="ChEBI" id="CHEBI:29108"/>
        <label>2</label>
    </ligand>
</feature>
<feature type="binding site" evidence="2 3">
    <location>
        <position position="136"/>
    </location>
    <ligand>
        <name>Ca(2+)</name>
        <dbReference type="ChEBI" id="CHEBI:29108"/>
        <label>2</label>
    </ligand>
</feature>
<feature type="binding site" evidence="2 3">
    <location>
        <position position="138"/>
    </location>
    <ligand>
        <name>Ca(2+)</name>
        <dbReference type="ChEBI" id="CHEBI:29108"/>
        <label>2</label>
    </ligand>
</feature>
<feature type="binding site" evidence="3">
    <location>
        <position position="143"/>
    </location>
    <ligand>
        <name>Ca(2+)</name>
        <dbReference type="ChEBI" id="CHEBI:29108"/>
        <label>2</label>
    </ligand>
</feature>
<feature type="binding site" evidence="2">
    <location>
        <position position="162"/>
    </location>
    <ligand>
        <name>Ca(2+)</name>
        <dbReference type="ChEBI" id="CHEBI:29108"/>
        <label>3</label>
    </ligand>
</feature>
<feature type="binding site" evidence="2">
    <location>
        <position position="164"/>
    </location>
    <ligand>
        <name>Ca(2+)</name>
        <dbReference type="ChEBI" id="CHEBI:29108"/>
        <label>3</label>
    </ligand>
</feature>
<feature type="binding site" evidence="2">
    <location>
        <position position="166"/>
    </location>
    <ligand>
        <name>Ca(2+)</name>
        <dbReference type="ChEBI" id="CHEBI:29108"/>
        <label>3</label>
    </ligand>
</feature>
<feature type="binding site" evidence="2">
    <location>
        <position position="205"/>
    </location>
    <ligand>
        <name>Ca(2+)</name>
        <dbReference type="ChEBI" id="CHEBI:29108"/>
        <label>4</label>
    </ligand>
</feature>
<feature type="sequence conflict" description="In Ref. 1; AAL02241." evidence="4" ref="1">
    <original>E</original>
    <variation>Q</variation>
    <location>
        <position position="74"/>
    </location>
</feature>
<comment type="function">
    <text>Calcium-regulated non-lysosomal thiol-protease which catalyzes limited proteolysis of substrates involved in cytoskeletal remodeling and signal transduction. This small subunit may act as a tissue-specific chaperone of the large subunit, possibly by helping it fold into its correct conformation for activity.</text>
</comment>
<comment type="subunit">
    <text>Heterodimer of a large (catalytic) and a small (regulatory) subunit.</text>
</comment>
<comment type="interaction">
    <interactant intactId="EBI-12188723">
        <id>Q96L46</id>
    </interactant>
    <interactant intactId="EBI-12902762">
        <id>Q8N2F6-2</id>
        <label>ARMC10</label>
    </interactant>
    <organismsDiffer>false</organismsDiffer>
    <experiments>3</experiments>
</comment>
<comment type="interaction">
    <interactant intactId="EBI-12188723">
        <id>Q96L46</id>
    </interactant>
    <interactant intactId="EBI-11522780">
        <id>Q96DZ9-2</id>
        <label>CMTM5</label>
    </interactant>
    <organismsDiffer>false</organismsDiffer>
    <experiments>3</experiments>
</comment>
<comment type="interaction">
    <interactant intactId="EBI-12188723">
        <id>Q96L46</id>
    </interactant>
    <interactant intactId="EBI-2862111">
        <id>Q96HP4</id>
        <label>OXNAD1</label>
    </interactant>
    <organismsDiffer>false</organismsDiffer>
    <experiments>3</experiments>
</comment>
<comment type="interaction">
    <interactant intactId="EBI-12188723">
        <id>Q96L46</id>
    </interactant>
    <interactant intactId="EBI-717068">
        <id>Q96KR7</id>
        <label>PHACTR3</label>
    </interactant>
    <organismsDiffer>false</organismsDiffer>
    <experiments>3</experiments>
</comment>
<comment type="interaction">
    <interactant intactId="EBI-12188723">
        <id>Q96L46</id>
    </interactant>
    <interactant intactId="EBI-953909">
        <id>P45877</id>
        <label>PPIC</label>
    </interactant>
    <organismsDiffer>false</organismsDiffer>
    <experiments>3</experiments>
</comment>
<comment type="interaction">
    <interactant intactId="EBI-12188723">
        <id>Q96L46</id>
    </interactant>
    <interactant intactId="EBI-1567797">
        <id>Q8WWY3</id>
        <label>PRPF31</label>
    </interactant>
    <organismsDiffer>false</organismsDiffer>
    <experiments>3</experiments>
</comment>
<comment type="interaction">
    <interactant intactId="EBI-12188723">
        <id>Q96L46</id>
    </interactant>
    <interactant intactId="EBI-366017">
        <id>Q13671</id>
        <label>RIN1</label>
    </interactant>
    <organismsDiffer>false</organismsDiffer>
    <experiments>3</experiments>
</comment>
<comment type="subcellular location">
    <subcellularLocation>
        <location evidence="1">Cytoplasm</location>
    </subcellularLocation>
    <subcellularLocation>
        <location evidence="1">Cell membrane</location>
    </subcellularLocation>
    <text evidence="1">Translocates to the plasma membrane upon calcium binding.</text>
</comment>
<comment type="online information" name="Calpains homepage">
    <link uri="https://cales.arizona.edu/calpains/"/>
</comment>
<keyword id="KW-0106">Calcium</keyword>
<keyword id="KW-1003">Cell membrane</keyword>
<keyword id="KW-0963">Cytoplasm</keyword>
<keyword id="KW-0472">Membrane</keyword>
<keyword id="KW-0479">Metal-binding</keyword>
<keyword id="KW-1267">Proteomics identification</keyword>
<keyword id="KW-1185">Reference proteome</keyword>
<keyword id="KW-0677">Repeat</keyword>
<organism>
    <name type="scientific">Homo sapiens</name>
    <name type="common">Human</name>
    <dbReference type="NCBI Taxonomy" id="9606"/>
    <lineage>
        <taxon>Eukaryota</taxon>
        <taxon>Metazoa</taxon>
        <taxon>Chordata</taxon>
        <taxon>Craniata</taxon>
        <taxon>Vertebrata</taxon>
        <taxon>Euteleostomi</taxon>
        <taxon>Mammalia</taxon>
        <taxon>Eutheria</taxon>
        <taxon>Euarchontoglires</taxon>
        <taxon>Primates</taxon>
        <taxon>Haplorrhini</taxon>
        <taxon>Catarrhini</taxon>
        <taxon>Hominidae</taxon>
        <taxon>Homo</taxon>
    </lineage>
</organism>
<dbReference type="EMBL" id="AY052551">
    <property type="protein sequence ID" value="AAL02241.1"/>
    <property type="molecule type" value="mRNA"/>
</dbReference>
<dbReference type="EMBL" id="BC005397">
    <property type="protein sequence ID" value="AAH05397.1"/>
    <property type="molecule type" value="mRNA"/>
</dbReference>
<dbReference type="EMBL" id="BC006000">
    <property type="protein sequence ID" value="AAH06000.1"/>
    <property type="molecule type" value="mRNA"/>
</dbReference>
<dbReference type="CCDS" id="CCDS54010.1"/>
<dbReference type="RefSeq" id="NP_115706.1">
    <property type="nucleotide sequence ID" value="NM_032330.3"/>
</dbReference>
<dbReference type="SMR" id="Q96L46"/>
<dbReference type="BioGRID" id="124017">
    <property type="interactions" value="70"/>
</dbReference>
<dbReference type="FunCoup" id="Q96L46">
    <property type="interactions" value="138"/>
</dbReference>
<dbReference type="IntAct" id="Q96L46">
    <property type="interactions" value="48"/>
</dbReference>
<dbReference type="STRING" id="9606.ENSP00000400882"/>
<dbReference type="iPTMnet" id="Q96L46"/>
<dbReference type="PhosphoSitePlus" id="Q96L46"/>
<dbReference type="BioMuta" id="CAPNS2"/>
<dbReference type="DMDM" id="45476965"/>
<dbReference type="jPOST" id="Q96L46"/>
<dbReference type="MassIVE" id="Q96L46"/>
<dbReference type="PaxDb" id="9606-ENSP00000400882"/>
<dbReference type="PeptideAtlas" id="Q96L46"/>
<dbReference type="ProteomicsDB" id="77149"/>
<dbReference type="Antibodypedia" id="58579">
    <property type="antibodies" value="158 antibodies from 26 providers"/>
</dbReference>
<dbReference type="DNASU" id="84290"/>
<dbReference type="Ensembl" id="ENST00000457326.3">
    <property type="protein sequence ID" value="ENSP00000400882.2"/>
    <property type="gene ID" value="ENSG00000256812.2"/>
</dbReference>
<dbReference type="GeneID" id="84290"/>
<dbReference type="KEGG" id="hsa:84290"/>
<dbReference type="MANE-Select" id="ENST00000457326.3">
    <property type="protein sequence ID" value="ENSP00000400882.2"/>
    <property type="RefSeq nucleotide sequence ID" value="NM_032330.3"/>
    <property type="RefSeq protein sequence ID" value="NP_115706.1"/>
</dbReference>
<dbReference type="UCSC" id="uc002eid.2">
    <property type="organism name" value="human"/>
</dbReference>
<dbReference type="AGR" id="HGNC:16371"/>
<dbReference type="CTD" id="84290"/>
<dbReference type="DisGeNET" id="84290"/>
<dbReference type="GeneCards" id="CAPNS2"/>
<dbReference type="HGNC" id="HGNC:16371">
    <property type="gene designation" value="CAPNS2"/>
</dbReference>
<dbReference type="HPA" id="ENSG00000256812">
    <property type="expression patterns" value="Tissue enhanced (esophagus, skin)"/>
</dbReference>
<dbReference type="neXtProt" id="NX_Q96L46"/>
<dbReference type="OpenTargets" id="ENSG00000256812"/>
<dbReference type="PharmGKB" id="PA134873146"/>
<dbReference type="VEuPathDB" id="HostDB:ENSG00000256812"/>
<dbReference type="eggNOG" id="KOG0037">
    <property type="taxonomic scope" value="Eukaryota"/>
</dbReference>
<dbReference type="GeneTree" id="ENSGT00940000166682"/>
<dbReference type="HOGENOM" id="CLU_051357_2_0_1"/>
<dbReference type="InParanoid" id="Q96L46"/>
<dbReference type="OMA" id="TCRSMVS"/>
<dbReference type="OrthoDB" id="186625at2759"/>
<dbReference type="PAN-GO" id="Q96L46">
    <property type="GO annotations" value="1 GO annotation based on evolutionary models"/>
</dbReference>
<dbReference type="PhylomeDB" id="Q96L46"/>
<dbReference type="TreeFam" id="TF314682"/>
<dbReference type="PathwayCommons" id="Q96L46"/>
<dbReference type="Reactome" id="R-HSA-1474228">
    <property type="pathway name" value="Degradation of the extracellular matrix"/>
</dbReference>
<dbReference type="Reactome" id="R-HSA-8862803">
    <property type="pathway name" value="Deregulated CDK5 triggers multiple neurodegenerative pathways in Alzheimer's disease models"/>
</dbReference>
<dbReference type="Reactome" id="R-HSA-9856530">
    <property type="pathway name" value="High laminar flow shear stress activates signaling by PIEZO1 and PECAM1:CDH5:KDR in endothelial cells"/>
</dbReference>
<dbReference type="Reactome" id="R-HSA-9860927">
    <property type="pathway name" value="Turbulent (oscillatory, disturbed) flow shear stress activates signaling by PIEZO1 and integrins in endothelial cells"/>
</dbReference>
<dbReference type="SignaLink" id="Q96L46"/>
<dbReference type="BioGRID-ORCS" id="84290">
    <property type="hits" value="7 hits in 1149 CRISPR screens"/>
</dbReference>
<dbReference type="GenomeRNAi" id="84290"/>
<dbReference type="Pharos" id="Q96L46">
    <property type="development level" value="Tbio"/>
</dbReference>
<dbReference type="PRO" id="PR:Q96L46"/>
<dbReference type="Proteomes" id="UP000005640">
    <property type="component" value="Chromosome 16"/>
</dbReference>
<dbReference type="RNAct" id="Q96L46">
    <property type="molecule type" value="protein"/>
</dbReference>
<dbReference type="Bgee" id="ENSG00000256812">
    <property type="expression patterns" value="Expressed in esophagus squamous epithelium and 102 other cell types or tissues"/>
</dbReference>
<dbReference type="GO" id="GO:0110158">
    <property type="term" value="C:calpain complex"/>
    <property type="evidence" value="ECO:0000318"/>
    <property type="project" value="GO_Central"/>
</dbReference>
<dbReference type="GO" id="GO:0005829">
    <property type="term" value="C:cytosol"/>
    <property type="evidence" value="ECO:0000304"/>
    <property type="project" value="Reactome"/>
</dbReference>
<dbReference type="GO" id="GO:0005886">
    <property type="term" value="C:plasma membrane"/>
    <property type="evidence" value="ECO:0000304"/>
    <property type="project" value="Reactome"/>
</dbReference>
<dbReference type="GO" id="GO:0005509">
    <property type="term" value="F:calcium ion binding"/>
    <property type="evidence" value="ECO:0007669"/>
    <property type="project" value="InterPro"/>
</dbReference>
<dbReference type="GO" id="GO:0004198">
    <property type="term" value="F:calcium-dependent cysteine-type endopeptidase activity"/>
    <property type="evidence" value="ECO:0000314"/>
    <property type="project" value="MGI"/>
</dbReference>
<dbReference type="CDD" id="cd16188">
    <property type="entry name" value="EFh_PEF_CPNS1_2"/>
    <property type="match status" value="1"/>
</dbReference>
<dbReference type="FunFam" id="1.10.238.10:FF:000136">
    <property type="entry name" value="Calpain small subunit 1"/>
    <property type="match status" value="1"/>
</dbReference>
<dbReference type="Gene3D" id="1.10.238.10">
    <property type="entry name" value="EF-hand"/>
    <property type="match status" value="1"/>
</dbReference>
<dbReference type="InterPro" id="IPR011992">
    <property type="entry name" value="EF-hand-dom_pair"/>
</dbReference>
<dbReference type="InterPro" id="IPR002048">
    <property type="entry name" value="EF_hand_dom"/>
</dbReference>
<dbReference type="PANTHER" id="PTHR46735:SF4">
    <property type="entry name" value="CALPAIN SMALL SUBUNIT 2"/>
    <property type="match status" value="1"/>
</dbReference>
<dbReference type="PANTHER" id="PTHR46735">
    <property type="entry name" value="CALPAIN, SMALL SUBUNIT 1 A-RELATED"/>
    <property type="match status" value="1"/>
</dbReference>
<dbReference type="Pfam" id="PF13833">
    <property type="entry name" value="EF-hand_8"/>
    <property type="match status" value="1"/>
</dbReference>
<dbReference type="SUPFAM" id="SSF47473">
    <property type="entry name" value="EF-hand"/>
    <property type="match status" value="1"/>
</dbReference>
<dbReference type="PROSITE" id="PS00018">
    <property type="entry name" value="EF_HAND_1"/>
    <property type="match status" value="1"/>
</dbReference>
<dbReference type="PROSITE" id="PS50222">
    <property type="entry name" value="EF_HAND_2"/>
    <property type="match status" value="3"/>
</dbReference>
<sequence length="248" mass="27660">MFLAKALLEGADRGLGEALGGLFGGGGQRREGGGRNIGGIVGGIVNFISEAAAAQYTPEPPPTQQHFTSVEASESEEVRRFRQQFTQLAGPDMEVGATDLMNILNKVLSKHKDLKTDGFSLDTCRSIVSVMDSDTTGKLGFEEFKYLWNNIKKWQCVYKQYDRDHSGSLGSSQLRGALQAAGFQLNEQLYQMIVRRYANEDGDMDFNNFISCLVRLDAMFRAFKSLDRDRDGLIQVSIKEWLQLTMYS</sequence>
<name>CPNS2_HUMAN</name>
<gene>
    <name type="primary">CAPNS2</name>
</gene>